<proteinExistence type="inferred from homology"/>
<reference key="1">
    <citation type="submission" date="2008-04" db="EMBL/GenBank/DDBJ databases">
        <title>Complete sequence of chromosome of Natranaerobius thermophilus JW/NM-WN-LF.</title>
        <authorList>
            <consortium name="US DOE Joint Genome Institute"/>
            <person name="Copeland A."/>
            <person name="Lucas S."/>
            <person name="Lapidus A."/>
            <person name="Glavina del Rio T."/>
            <person name="Dalin E."/>
            <person name="Tice H."/>
            <person name="Bruce D."/>
            <person name="Goodwin L."/>
            <person name="Pitluck S."/>
            <person name="Chertkov O."/>
            <person name="Brettin T."/>
            <person name="Detter J.C."/>
            <person name="Han C."/>
            <person name="Kuske C.R."/>
            <person name="Schmutz J."/>
            <person name="Larimer F."/>
            <person name="Land M."/>
            <person name="Hauser L."/>
            <person name="Kyrpides N."/>
            <person name="Lykidis A."/>
            <person name="Mesbah N.M."/>
            <person name="Wiegel J."/>
        </authorList>
    </citation>
    <scope>NUCLEOTIDE SEQUENCE [LARGE SCALE GENOMIC DNA]</scope>
    <source>
        <strain>ATCC BAA-1301 / DSM 18059 / JW/NM-WN-LF</strain>
    </source>
</reference>
<accession>B2A8C9</accession>
<feature type="chain" id="PRO_1000134256" description="Homoserine kinase">
    <location>
        <begin position="1"/>
        <end position="311"/>
    </location>
</feature>
<feature type="binding site" evidence="1">
    <location>
        <begin position="96"/>
        <end position="106"/>
    </location>
    <ligand>
        <name>ATP</name>
        <dbReference type="ChEBI" id="CHEBI:30616"/>
    </ligand>
</feature>
<protein>
    <recommendedName>
        <fullName evidence="1">Homoserine kinase</fullName>
        <shortName evidence="1">HK</shortName>
        <shortName evidence="1">HSK</shortName>
        <ecNumber evidence="1">2.7.1.39</ecNumber>
    </recommendedName>
</protein>
<comment type="function">
    <text evidence="1">Catalyzes the ATP-dependent phosphorylation of L-homoserine to L-homoserine phosphate.</text>
</comment>
<comment type="catalytic activity">
    <reaction evidence="1">
        <text>L-homoserine + ATP = O-phospho-L-homoserine + ADP + H(+)</text>
        <dbReference type="Rhea" id="RHEA:13985"/>
        <dbReference type="ChEBI" id="CHEBI:15378"/>
        <dbReference type="ChEBI" id="CHEBI:30616"/>
        <dbReference type="ChEBI" id="CHEBI:57476"/>
        <dbReference type="ChEBI" id="CHEBI:57590"/>
        <dbReference type="ChEBI" id="CHEBI:456216"/>
        <dbReference type="EC" id="2.7.1.39"/>
    </reaction>
</comment>
<comment type="pathway">
    <text evidence="1">Amino-acid biosynthesis; L-threonine biosynthesis; L-threonine from L-aspartate: step 4/5.</text>
</comment>
<comment type="subcellular location">
    <subcellularLocation>
        <location evidence="1">Cytoplasm</location>
    </subcellularLocation>
</comment>
<comment type="similarity">
    <text evidence="1">Belongs to the GHMP kinase family. Homoserine kinase subfamily.</text>
</comment>
<name>KHSE_NATTJ</name>
<gene>
    <name evidence="1" type="primary">thrB</name>
    <name type="ordered locus">Nther_0910</name>
</gene>
<dbReference type="EC" id="2.7.1.39" evidence="1"/>
<dbReference type="EMBL" id="CP001034">
    <property type="protein sequence ID" value="ACB84495.1"/>
    <property type="molecule type" value="Genomic_DNA"/>
</dbReference>
<dbReference type="RefSeq" id="WP_012447373.1">
    <property type="nucleotide sequence ID" value="NC_010718.1"/>
</dbReference>
<dbReference type="SMR" id="B2A8C9"/>
<dbReference type="FunCoup" id="B2A8C9">
    <property type="interactions" value="283"/>
</dbReference>
<dbReference type="STRING" id="457570.Nther_0910"/>
<dbReference type="KEGG" id="nth:Nther_0910"/>
<dbReference type="eggNOG" id="COG0083">
    <property type="taxonomic scope" value="Bacteria"/>
</dbReference>
<dbReference type="HOGENOM" id="CLU_041243_0_2_9"/>
<dbReference type="InParanoid" id="B2A8C9"/>
<dbReference type="OrthoDB" id="9769912at2"/>
<dbReference type="UniPathway" id="UPA00050">
    <property type="reaction ID" value="UER00064"/>
</dbReference>
<dbReference type="Proteomes" id="UP000001683">
    <property type="component" value="Chromosome"/>
</dbReference>
<dbReference type="GO" id="GO:0005737">
    <property type="term" value="C:cytoplasm"/>
    <property type="evidence" value="ECO:0007669"/>
    <property type="project" value="UniProtKB-SubCell"/>
</dbReference>
<dbReference type="GO" id="GO:0005524">
    <property type="term" value="F:ATP binding"/>
    <property type="evidence" value="ECO:0007669"/>
    <property type="project" value="UniProtKB-UniRule"/>
</dbReference>
<dbReference type="GO" id="GO:0004413">
    <property type="term" value="F:homoserine kinase activity"/>
    <property type="evidence" value="ECO:0007669"/>
    <property type="project" value="UniProtKB-UniRule"/>
</dbReference>
<dbReference type="GO" id="GO:0009088">
    <property type="term" value="P:threonine biosynthetic process"/>
    <property type="evidence" value="ECO:0007669"/>
    <property type="project" value="UniProtKB-UniRule"/>
</dbReference>
<dbReference type="Gene3D" id="3.30.230.10">
    <property type="match status" value="1"/>
</dbReference>
<dbReference type="Gene3D" id="3.30.70.890">
    <property type="entry name" value="GHMP kinase, C-terminal domain"/>
    <property type="match status" value="1"/>
</dbReference>
<dbReference type="HAMAP" id="MF_00384">
    <property type="entry name" value="Homoser_kinase"/>
    <property type="match status" value="1"/>
</dbReference>
<dbReference type="InterPro" id="IPR013750">
    <property type="entry name" value="GHMP_kinase_C_dom"/>
</dbReference>
<dbReference type="InterPro" id="IPR036554">
    <property type="entry name" value="GHMP_kinase_C_sf"/>
</dbReference>
<dbReference type="InterPro" id="IPR006204">
    <property type="entry name" value="GHMP_kinase_N_dom"/>
</dbReference>
<dbReference type="InterPro" id="IPR006203">
    <property type="entry name" value="GHMP_knse_ATP-bd_CS"/>
</dbReference>
<dbReference type="InterPro" id="IPR000870">
    <property type="entry name" value="Homoserine_kinase"/>
</dbReference>
<dbReference type="InterPro" id="IPR020568">
    <property type="entry name" value="Ribosomal_Su5_D2-typ_SF"/>
</dbReference>
<dbReference type="InterPro" id="IPR014721">
    <property type="entry name" value="Ribsml_uS5_D2-typ_fold_subgr"/>
</dbReference>
<dbReference type="NCBIfam" id="NF002288">
    <property type="entry name" value="PRK01212.1-4"/>
    <property type="match status" value="1"/>
</dbReference>
<dbReference type="NCBIfam" id="TIGR00191">
    <property type="entry name" value="thrB"/>
    <property type="match status" value="1"/>
</dbReference>
<dbReference type="PANTHER" id="PTHR20861:SF1">
    <property type="entry name" value="HOMOSERINE KINASE"/>
    <property type="match status" value="1"/>
</dbReference>
<dbReference type="PANTHER" id="PTHR20861">
    <property type="entry name" value="HOMOSERINE/4-DIPHOSPHOCYTIDYL-2-C-METHYL-D-ERYTHRITOL KINASE"/>
    <property type="match status" value="1"/>
</dbReference>
<dbReference type="Pfam" id="PF08544">
    <property type="entry name" value="GHMP_kinases_C"/>
    <property type="match status" value="1"/>
</dbReference>
<dbReference type="Pfam" id="PF00288">
    <property type="entry name" value="GHMP_kinases_N"/>
    <property type="match status" value="1"/>
</dbReference>
<dbReference type="PIRSF" id="PIRSF000676">
    <property type="entry name" value="Homoser_kin"/>
    <property type="match status" value="1"/>
</dbReference>
<dbReference type="PRINTS" id="PR00958">
    <property type="entry name" value="HOMSERKINASE"/>
</dbReference>
<dbReference type="SUPFAM" id="SSF55060">
    <property type="entry name" value="GHMP Kinase, C-terminal domain"/>
    <property type="match status" value="1"/>
</dbReference>
<dbReference type="SUPFAM" id="SSF54211">
    <property type="entry name" value="Ribosomal protein S5 domain 2-like"/>
    <property type="match status" value="1"/>
</dbReference>
<dbReference type="PROSITE" id="PS00627">
    <property type="entry name" value="GHMP_KINASES_ATP"/>
    <property type="match status" value="1"/>
</dbReference>
<keyword id="KW-0028">Amino-acid biosynthesis</keyword>
<keyword id="KW-0067">ATP-binding</keyword>
<keyword id="KW-0963">Cytoplasm</keyword>
<keyword id="KW-0418">Kinase</keyword>
<keyword id="KW-0547">Nucleotide-binding</keyword>
<keyword id="KW-1185">Reference proteome</keyword>
<keyword id="KW-0791">Threonine biosynthesis</keyword>
<keyword id="KW-0808">Transferase</keyword>
<evidence type="ECO:0000255" key="1">
    <source>
        <dbReference type="HAMAP-Rule" id="MF_00384"/>
    </source>
</evidence>
<organism>
    <name type="scientific">Natranaerobius thermophilus (strain ATCC BAA-1301 / DSM 18059 / JW/NM-WN-LF)</name>
    <dbReference type="NCBI Taxonomy" id="457570"/>
    <lineage>
        <taxon>Bacteria</taxon>
        <taxon>Bacillati</taxon>
        <taxon>Bacillota</taxon>
        <taxon>Clostridia</taxon>
        <taxon>Natranaerobiales</taxon>
        <taxon>Natranaerobiaceae</taxon>
        <taxon>Natranaerobius</taxon>
    </lineage>
</organism>
<sequence>MEEKNLVKVQVPGTSANLGAGFDSMGIALNIYNYVSLRQLEPGSGVIIEVKGEGADFISRDKDNLVYQAIAGVYREIYGSDVLIPDLEITLENNIPLARGLGSSAAAIVGGAVAANEMFNGELTRDELLKHVLELEGHLDNIAPAMYGGLTCSLITRENELMFRTVDVVEDWNFIIIVPGQELSTQKAREALPERIAFQDGLFNLSRANMLILAFQQRDYELLWHSMDDELHEPYRAKLIPGLDRLLQEVRGAGIPAAISGAGPSIACVLSEIEEEKIVRELGKEKFSAHGIESNFFKLKPDNSGAKSILH</sequence>